<sequence length="558" mass="59464">MAQGSDIEIAREAKMQNIAEVGAKVGIPQDALLNYGPYKAKLSWDFINSVQGNQDGKLILVTAINPTPAGEGKTTTTVGLADGLNRIGKKTVAALREPSLGPCFGVKGGAAGGGYAQVVPMEDINLHFTGDFHAITSANNLLAALIDNHIYWGNKLGLDPRRIAWRRVLDMNDRALRSIVNSLGGVSNGYPREDGFDITVASEVMAILCLSSDLKDLERRLGNIHAGYTRERKAVLASELNASGAMTVLLKDALQPNMVQTLENNPVLIHGGPFANIAHGCNSVLATKTALKIADYVVTEAGFGADLGAEKFFDIKCRKAGLKPSAAVIVATIRALKMHGGVDKADLGTANPEAVRKGGVNLARHIENVRQFGVPVVVAINQFITDTDEEMAMVKEIAEAAGAEAVLCSHWANGSAGTEELARKVVLHAESGSSNFAPLYEDSMPLFEKIDTIAKRIYRATEATADSSVRNKLKGWEADGFGHLPVCMAKTQYSFSTDPALRGAPTDHVVPVRDVILSAGAEFIVAVCGDIMRMPGLPKVPSADFIKLDEQGQIQGLF</sequence>
<keyword id="KW-0067">ATP-binding</keyword>
<keyword id="KW-0436">Ligase</keyword>
<keyword id="KW-0547">Nucleotide-binding</keyword>
<keyword id="KW-0554">One-carbon metabolism</keyword>
<keyword id="KW-1185">Reference proteome</keyword>
<organism>
    <name type="scientific">Sphingobium sp. (strain NBRC 103272 / SYK-6)</name>
    <dbReference type="NCBI Taxonomy" id="627192"/>
    <lineage>
        <taxon>Bacteria</taxon>
        <taxon>Pseudomonadati</taxon>
        <taxon>Pseudomonadota</taxon>
        <taxon>Alphaproteobacteria</taxon>
        <taxon>Sphingomonadales</taxon>
        <taxon>Sphingomonadaceae</taxon>
        <taxon>Sphingobium</taxon>
    </lineage>
</organism>
<gene>
    <name evidence="1" type="primary">fhs</name>
    <name evidence="4" type="synonym">ligH</name>
    <name evidence="5" type="ORF">SLG_12760</name>
</gene>
<accession>O66164</accession>
<accession>G2IQS9</accession>
<accession>Q60FW9</accession>
<evidence type="ECO:0000255" key="1">
    <source>
        <dbReference type="HAMAP-Rule" id="MF_01543"/>
    </source>
</evidence>
<evidence type="ECO:0000269" key="2">
    <source>
    </source>
</evidence>
<evidence type="ECO:0000269" key="3">
    <source>
    </source>
</evidence>
<evidence type="ECO:0000303" key="4">
    <source>
    </source>
</evidence>
<evidence type="ECO:0000312" key="5">
    <source>
        <dbReference type="EMBL" id="BAK65951.1"/>
    </source>
</evidence>
<comment type="catalytic activity">
    <reaction evidence="1">
        <text>(6S)-5,6,7,8-tetrahydrofolate + formate + ATP = (6R)-10-formyltetrahydrofolate + ADP + phosphate</text>
        <dbReference type="Rhea" id="RHEA:20221"/>
        <dbReference type="ChEBI" id="CHEBI:15740"/>
        <dbReference type="ChEBI" id="CHEBI:30616"/>
        <dbReference type="ChEBI" id="CHEBI:43474"/>
        <dbReference type="ChEBI" id="CHEBI:57453"/>
        <dbReference type="ChEBI" id="CHEBI:195366"/>
        <dbReference type="ChEBI" id="CHEBI:456216"/>
        <dbReference type="EC" id="6.3.4.3"/>
    </reaction>
</comment>
<comment type="pathway">
    <text evidence="1">One-carbon metabolism; tetrahydrofolate interconversion.</text>
</comment>
<comment type="disruption phenotype">
    <text evidence="2 3">Mutant cannot degrade vanillate or syringate, but it can degrade protocatechuate and 3-O-methylgallate (PubMed:9501423). Mutant shows O-demethylation activity toward both vanillate and syringate in the presence of tetrahydrofolate, indicating that ligH is not directly involved in the O demethylation of vanillate and syringate (PubMed:15090517).</text>
</comment>
<comment type="similarity">
    <text evidence="1">Belongs to the formate--tetrahydrofolate ligase family.</text>
</comment>
<proteinExistence type="inferred from homology"/>
<dbReference type="EC" id="6.3.4.3" evidence="1"/>
<dbReference type="EMBL" id="AB006079">
    <property type="protein sequence ID" value="BAA25140.1"/>
    <property type="molecule type" value="Genomic_DNA"/>
</dbReference>
<dbReference type="EMBL" id="AB186750">
    <property type="protein sequence ID" value="BAD61061.1"/>
    <property type="molecule type" value="Genomic_DNA"/>
</dbReference>
<dbReference type="EMBL" id="AP012222">
    <property type="protein sequence ID" value="BAK65951.1"/>
    <property type="molecule type" value="Genomic_DNA"/>
</dbReference>
<dbReference type="RefSeq" id="WP_014075602.1">
    <property type="nucleotide sequence ID" value="NC_015976.1"/>
</dbReference>
<dbReference type="SMR" id="O66164"/>
<dbReference type="STRING" id="627192.SLG_12760"/>
<dbReference type="KEGG" id="ssy:SLG_12760"/>
<dbReference type="eggNOG" id="COG2759">
    <property type="taxonomic scope" value="Bacteria"/>
</dbReference>
<dbReference type="HOGENOM" id="CLU_003601_3_3_5"/>
<dbReference type="OrthoDB" id="9761733at2"/>
<dbReference type="UniPathway" id="UPA00193"/>
<dbReference type="Proteomes" id="UP000001275">
    <property type="component" value="Chromosome"/>
</dbReference>
<dbReference type="GO" id="GO:0005524">
    <property type="term" value="F:ATP binding"/>
    <property type="evidence" value="ECO:0007669"/>
    <property type="project" value="UniProtKB-UniRule"/>
</dbReference>
<dbReference type="GO" id="GO:0004329">
    <property type="term" value="F:formate-tetrahydrofolate ligase activity"/>
    <property type="evidence" value="ECO:0007669"/>
    <property type="project" value="UniProtKB-UniRule"/>
</dbReference>
<dbReference type="GO" id="GO:0035999">
    <property type="term" value="P:tetrahydrofolate interconversion"/>
    <property type="evidence" value="ECO:0007669"/>
    <property type="project" value="UniProtKB-UniRule"/>
</dbReference>
<dbReference type="CDD" id="cd00477">
    <property type="entry name" value="FTHFS"/>
    <property type="match status" value="1"/>
</dbReference>
<dbReference type="FunFam" id="3.30.1510.10:FF:000001">
    <property type="entry name" value="Formate--tetrahydrofolate ligase"/>
    <property type="match status" value="1"/>
</dbReference>
<dbReference type="FunFam" id="3.10.410.10:FF:000001">
    <property type="entry name" value="Putative formate--tetrahydrofolate ligase"/>
    <property type="match status" value="1"/>
</dbReference>
<dbReference type="Gene3D" id="3.30.1510.10">
    <property type="entry name" value="Domain 2, N(10)-formyltetrahydrofolate synthetase"/>
    <property type="match status" value="1"/>
</dbReference>
<dbReference type="Gene3D" id="3.10.410.10">
    <property type="entry name" value="Formyltetrahydrofolate synthetase, domain 3"/>
    <property type="match status" value="1"/>
</dbReference>
<dbReference type="Gene3D" id="3.40.50.300">
    <property type="entry name" value="P-loop containing nucleotide triphosphate hydrolases"/>
    <property type="match status" value="1"/>
</dbReference>
<dbReference type="HAMAP" id="MF_01543">
    <property type="entry name" value="FTHFS"/>
    <property type="match status" value="1"/>
</dbReference>
<dbReference type="InterPro" id="IPR000559">
    <property type="entry name" value="Formate_THF_ligase"/>
</dbReference>
<dbReference type="InterPro" id="IPR020628">
    <property type="entry name" value="Formate_THF_ligase_CS"/>
</dbReference>
<dbReference type="InterPro" id="IPR027417">
    <property type="entry name" value="P-loop_NTPase"/>
</dbReference>
<dbReference type="NCBIfam" id="NF010030">
    <property type="entry name" value="PRK13505.1"/>
    <property type="match status" value="1"/>
</dbReference>
<dbReference type="Pfam" id="PF01268">
    <property type="entry name" value="FTHFS"/>
    <property type="match status" value="1"/>
</dbReference>
<dbReference type="SUPFAM" id="SSF52540">
    <property type="entry name" value="P-loop containing nucleoside triphosphate hydrolases"/>
    <property type="match status" value="1"/>
</dbReference>
<dbReference type="PROSITE" id="PS00721">
    <property type="entry name" value="FTHFS_1"/>
    <property type="match status" value="1"/>
</dbReference>
<dbReference type="PROSITE" id="PS00722">
    <property type="entry name" value="FTHFS_2"/>
    <property type="match status" value="1"/>
</dbReference>
<protein>
    <recommendedName>
        <fullName evidence="1">Formate--tetrahydrofolate ligase</fullName>
        <ecNumber evidence="1">6.3.4.3</ecNumber>
    </recommendedName>
    <alternativeName>
        <fullName evidence="1">Formyltetrahydrofolate synthetase</fullName>
        <shortName evidence="1">FHS</shortName>
        <shortName evidence="1">FTHFS</shortName>
    </alternativeName>
</protein>
<reference key="1">
    <citation type="journal article" date="1998" name="Appl. Environ. Microbiol.">
        <title>Cloning and sequencing of the Sphingomonas (Pseudomonas) paucimobilis gene essential for the O demethylation of vanillate and syringate.</title>
        <authorList>
            <person name="Nishikawa S."/>
            <person name="Sonoki T."/>
            <person name="Kasahara T."/>
            <person name="Obi T."/>
            <person name="Kubota S."/>
            <person name="Kawai S."/>
            <person name="Morohoshi N."/>
            <person name="Katayama Y."/>
        </authorList>
    </citation>
    <scope>NUCLEOTIDE SEQUENCE [GENOMIC DNA]</scope>
    <scope>DISRUPTION PHENOTYPE</scope>
    <source>
        <strain>NBRC 103272 / SYK-6</strain>
    </source>
</reference>
<reference key="2">
    <citation type="journal article" date="2005" name="J. Bacteriol.">
        <title>A tetrahydrofolate-dependent O-demethylase, LigM, is crucial for catabolism of vanillate and syringate in Sphingomonas paucimobilis SYK-6.</title>
        <authorList>
            <person name="Abe T."/>
            <person name="Masai E."/>
            <person name="Miyauchi K."/>
            <person name="Katayama Y."/>
            <person name="Fukuda M."/>
        </authorList>
    </citation>
    <scope>NUCLEOTIDE SEQUENCE [GENOMIC DNA]</scope>
    <source>
        <strain>NBRC 103272 / SYK-6</strain>
    </source>
</reference>
<reference key="3">
    <citation type="journal article" date="2012" name="J. Bacteriol.">
        <title>Complete genome sequence of Sphingobium sp. strain SYK-6, a degrader of lignin-derived biaryls and monoaryls.</title>
        <authorList>
            <person name="Masai E."/>
            <person name="Kamimura N."/>
            <person name="Kasai D."/>
            <person name="Oguchi A."/>
            <person name="Ankai A."/>
            <person name="Fukui S."/>
            <person name="Takahashi M."/>
            <person name="Yashiro I."/>
            <person name="Sasaki H."/>
            <person name="Harada T."/>
            <person name="Nakamura S."/>
            <person name="Katano Y."/>
            <person name="Narita-Yamada S."/>
            <person name="Nakazawa H."/>
            <person name="Hara H."/>
            <person name="Katayama Y."/>
            <person name="Fukuda M."/>
            <person name="Yamazaki S."/>
            <person name="Fujita N."/>
        </authorList>
    </citation>
    <scope>NUCLEOTIDE SEQUENCE [LARGE SCALE GENOMIC DNA]</scope>
    <source>
        <strain>NBRC 103272 / SYK-6</strain>
    </source>
</reference>
<reference key="4">
    <citation type="journal article" date="2004" name="J. Bacteriol.">
        <title>A novel tetrahydrofolate-dependent O-demethylase gene is essential for growth of Sphingomonas paucimobilis SYK-6 with syringate.</title>
        <authorList>
            <person name="Masai E."/>
            <person name="Sasaki M."/>
            <person name="Minakawa Y."/>
            <person name="Abe T."/>
            <person name="Sonoki T."/>
            <person name="Miyauchi K."/>
            <person name="Katayama Y."/>
            <person name="Fukuda M."/>
        </authorList>
    </citation>
    <scope>DISRUPTION PHENOTYPE</scope>
    <source>
        <strain>NBRC 103272 / SYK-6</strain>
    </source>
</reference>
<feature type="chain" id="PRO_0000199370" description="Formate--tetrahydrofolate ligase">
    <location>
        <begin position="1"/>
        <end position="558"/>
    </location>
</feature>
<feature type="binding site" evidence="1">
    <location>
        <begin position="67"/>
        <end position="74"/>
    </location>
    <ligand>
        <name>ATP</name>
        <dbReference type="ChEBI" id="CHEBI:30616"/>
    </ligand>
</feature>
<feature type="sequence conflict" description="In Ref. 1; BAA25140." ref="1">
    <original>AK</original>
    <variation>ER</variation>
    <location>
        <begin position="13"/>
        <end position="14"/>
    </location>
</feature>
<feature type="sequence conflict" description="In Ref. 1; BAA25140." ref="1">
    <original>AL</original>
    <variation>V</variation>
    <location>
        <begin position="175"/>
        <end position="176"/>
    </location>
</feature>
<feature type="sequence conflict" description="In Ref. 1; BAA25140." ref="1">
    <original>L</original>
    <variation>H</variation>
    <location>
        <position position="427"/>
    </location>
</feature>
<name>FTHS_SPHSK</name>